<comment type="similarity">
    <text evidence="1">Belongs to the TorD/DmsD family.</text>
</comment>
<dbReference type="EMBL" id="L42023">
    <property type="protein sequence ID" value="AAC23193.1"/>
    <property type="molecule type" value="Genomic_DNA"/>
</dbReference>
<dbReference type="PIR" id="F64035">
    <property type="entry name" value="F64035"/>
</dbReference>
<dbReference type="RefSeq" id="NP_439692.1">
    <property type="nucleotide sequence ID" value="NC_000907.1"/>
</dbReference>
<dbReference type="SMR" id="P44248"/>
<dbReference type="STRING" id="71421.HI_1543"/>
<dbReference type="EnsemblBacteria" id="AAC23193">
    <property type="protein sequence ID" value="AAC23193"/>
    <property type="gene ID" value="HI_1543"/>
</dbReference>
<dbReference type="KEGG" id="hin:HI_1543"/>
<dbReference type="PATRIC" id="fig|71421.8.peg.1614"/>
<dbReference type="eggNOG" id="COG3381">
    <property type="taxonomic scope" value="Bacteria"/>
</dbReference>
<dbReference type="HOGENOM" id="CLU_077650_7_2_6"/>
<dbReference type="OrthoDB" id="5684843at2"/>
<dbReference type="PhylomeDB" id="P44248"/>
<dbReference type="BioCyc" id="HINF71421:G1GJ1-1563-MONOMER"/>
<dbReference type="Proteomes" id="UP000000579">
    <property type="component" value="Chromosome"/>
</dbReference>
<dbReference type="GO" id="GO:0005737">
    <property type="term" value="C:cytoplasm"/>
    <property type="evidence" value="ECO:0000318"/>
    <property type="project" value="GO_Central"/>
</dbReference>
<dbReference type="GO" id="GO:0051604">
    <property type="term" value="P:protein maturation"/>
    <property type="evidence" value="ECO:0000318"/>
    <property type="project" value="GO_Central"/>
</dbReference>
<dbReference type="Gene3D" id="1.10.3480.10">
    <property type="entry name" value="TorD-like"/>
    <property type="match status" value="1"/>
</dbReference>
<dbReference type="InterPro" id="IPR026269">
    <property type="entry name" value="DmsD-type"/>
</dbReference>
<dbReference type="InterPro" id="IPR036411">
    <property type="entry name" value="TorD-like_sf"/>
</dbReference>
<dbReference type="InterPro" id="IPR050289">
    <property type="entry name" value="TorD/DmsD_chaperones"/>
</dbReference>
<dbReference type="PANTHER" id="PTHR34227">
    <property type="entry name" value="CHAPERONE PROTEIN YCDY"/>
    <property type="match status" value="1"/>
</dbReference>
<dbReference type="PANTHER" id="PTHR34227:SF12">
    <property type="entry name" value="CHAPERONE PROTEIN YCDY"/>
    <property type="match status" value="1"/>
</dbReference>
<dbReference type="PIRSF" id="PIRSF004690">
    <property type="entry name" value="DmsD"/>
    <property type="match status" value="1"/>
</dbReference>
<dbReference type="SUPFAM" id="SSF89155">
    <property type="entry name" value="TorD-like"/>
    <property type="match status" value="1"/>
</dbReference>
<sequence>MSEKQINNFSLISRLFGNLFYRFPTDKVLADAFVWLQQEGLSQVWALDTDKESELALNSLQVKIDLNLLNEEYQKLFATNGKVMTAISAYGIDVEEFVNFRLVRNMPEVESADHFALLLLTASWLEDNSDSLVAQQEFFETFLLPCAAKFLTQVENQATLPFYRALALLTREILATMADELEEE</sequence>
<gene>
    <name type="ordered locus">HI_1543</name>
</gene>
<name>Y1543_HAEIN</name>
<proteinExistence type="inferred from homology"/>
<organism>
    <name type="scientific">Haemophilus influenzae (strain ATCC 51907 / DSM 11121 / KW20 / Rd)</name>
    <dbReference type="NCBI Taxonomy" id="71421"/>
    <lineage>
        <taxon>Bacteria</taxon>
        <taxon>Pseudomonadati</taxon>
        <taxon>Pseudomonadota</taxon>
        <taxon>Gammaproteobacteria</taxon>
        <taxon>Pasteurellales</taxon>
        <taxon>Pasteurellaceae</taxon>
        <taxon>Haemophilus</taxon>
    </lineage>
</organism>
<accession>P44248</accession>
<evidence type="ECO:0000305" key="1"/>
<feature type="chain" id="PRO_0000211658" description="Uncharacterized protein HI_1543">
    <location>
        <begin position="1"/>
        <end position="184"/>
    </location>
</feature>
<protein>
    <recommendedName>
        <fullName>Uncharacterized protein HI_1543</fullName>
    </recommendedName>
</protein>
<reference key="1">
    <citation type="journal article" date="1995" name="Science">
        <title>Whole-genome random sequencing and assembly of Haemophilus influenzae Rd.</title>
        <authorList>
            <person name="Fleischmann R.D."/>
            <person name="Adams M.D."/>
            <person name="White O."/>
            <person name="Clayton R.A."/>
            <person name="Kirkness E.F."/>
            <person name="Kerlavage A.R."/>
            <person name="Bult C.J."/>
            <person name="Tomb J.-F."/>
            <person name="Dougherty B.A."/>
            <person name="Merrick J.M."/>
            <person name="McKenney K."/>
            <person name="Sutton G.G."/>
            <person name="FitzHugh W."/>
            <person name="Fields C.A."/>
            <person name="Gocayne J.D."/>
            <person name="Scott J.D."/>
            <person name="Shirley R."/>
            <person name="Liu L.-I."/>
            <person name="Glodek A."/>
            <person name="Kelley J.M."/>
            <person name="Weidman J.F."/>
            <person name="Phillips C.A."/>
            <person name="Spriggs T."/>
            <person name="Hedblom E."/>
            <person name="Cotton M.D."/>
            <person name="Utterback T.R."/>
            <person name="Hanna M.C."/>
            <person name="Nguyen D.T."/>
            <person name="Saudek D.M."/>
            <person name="Brandon R.C."/>
            <person name="Fine L.D."/>
            <person name="Fritchman J.L."/>
            <person name="Fuhrmann J.L."/>
            <person name="Geoghagen N.S.M."/>
            <person name="Gnehm C.L."/>
            <person name="McDonald L.A."/>
            <person name="Small K.V."/>
            <person name="Fraser C.M."/>
            <person name="Smith H.O."/>
            <person name="Venter J.C."/>
        </authorList>
    </citation>
    <scope>NUCLEOTIDE SEQUENCE [LARGE SCALE GENOMIC DNA]</scope>
    <source>
        <strain>ATCC 51907 / DSM 11121 / KW20 / Rd</strain>
    </source>
</reference>
<keyword id="KW-1185">Reference proteome</keyword>